<name>SCHA_STRHA</name>
<feature type="chain" id="PRO_0000097623" description="Protein SchA">
    <location>
        <begin position="1"/>
        <end position="380"/>
    </location>
</feature>
<feature type="domain" description="ABM">
    <location>
        <begin position="24"/>
        <end position="115"/>
    </location>
</feature>
<proteinExistence type="inferred from homology"/>
<dbReference type="EMBL" id="L05390">
    <property type="protein sequence ID" value="AAA02831.1"/>
    <property type="molecule type" value="Genomic_DNA"/>
</dbReference>
<dbReference type="PIR" id="JN0823">
    <property type="entry name" value="JN0823"/>
</dbReference>
<dbReference type="SMR" id="Q05361"/>
<dbReference type="Gene3D" id="3.30.70.100">
    <property type="match status" value="1"/>
</dbReference>
<dbReference type="InterPro" id="IPR007138">
    <property type="entry name" value="ABM_dom"/>
</dbReference>
<dbReference type="InterPro" id="IPR011008">
    <property type="entry name" value="Dimeric_a/b-barrel"/>
</dbReference>
<dbReference type="InterPro" id="IPR007575">
    <property type="entry name" value="SchA_CurD-like"/>
</dbReference>
<dbReference type="Pfam" id="PF03992">
    <property type="entry name" value="ABM"/>
    <property type="match status" value="1"/>
</dbReference>
<dbReference type="Pfam" id="PF04486">
    <property type="entry name" value="SchA_CurD"/>
    <property type="match status" value="1"/>
</dbReference>
<dbReference type="SUPFAM" id="SSF54909">
    <property type="entry name" value="Dimeric alpha+beta barrel"/>
    <property type="match status" value="1"/>
</dbReference>
<dbReference type="PROSITE" id="PS51725">
    <property type="entry name" value="ABM"/>
    <property type="match status" value="1"/>
</dbReference>
<accession>Q05361</accession>
<evidence type="ECO:0000305" key="1"/>
<gene>
    <name type="primary">schA</name>
</gene>
<protein>
    <recommendedName>
        <fullName>Protein SchA</fullName>
    </recommendedName>
</protein>
<reference key="1">
    <citation type="journal article" date="1993" name="Gene">
        <title>Hybridization and DNA sequence analyses suggest an early evolutionary divergence of related biosynthetic gene sets encoding polyketide antibiotics and spore pigments in Streptomyces spp.</title>
        <authorList>
            <person name="Blanco G."/>
            <person name="Brian P."/>
            <person name="Pereda A."/>
            <person name="Mendez C."/>
            <person name="Salas J.A."/>
            <person name="Chater K.F."/>
        </authorList>
    </citation>
    <scope>NUCLEOTIDE SEQUENCE [GENOMIC DNA]</scope>
</reference>
<sequence length="380" mass="41213">MTVSAAVSTVPDRVPLTVFDGSRVRVVLMLDIRDGTQAEVLDAYERMSDRVAAVPGHISDQLCQSLENPTQWLITSEWESAPEFLAWANSEEHLEMVRPLEPYVRGTHSMRYSVLRETAEERAGAGAAARGALQPRPRIGDNVVRHAVTYTVKPDSVTEVVKILSAYTSPEVRVDDTTRLVRTSLFLYGNRVVRAIEVRGDLQAALRHVARQPEVRAVEEALTPHIEQDRDLTDPRSARLFFTRAALPAVHHVVSGRGTGGDTQRCALYYPAHPGAGPALARLLARQGEATVGDPGSPVVACTVFHRDDLVVRLVDTAGAPERAPGAVLALHEPDALAEAGRLLDAAALGADGPPDDRALPTFLAHARMRPLTDRQSPAS</sequence>
<comment type="similarity">
    <text evidence="1">Belongs to the SchA/CurD family.</text>
</comment>
<organism>
    <name type="scientific">Streptomyces halstedii</name>
    <dbReference type="NCBI Taxonomy" id="1944"/>
    <lineage>
        <taxon>Bacteria</taxon>
        <taxon>Bacillati</taxon>
        <taxon>Actinomycetota</taxon>
        <taxon>Actinomycetes</taxon>
        <taxon>Kitasatosporales</taxon>
        <taxon>Streptomycetaceae</taxon>
        <taxon>Streptomyces</taxon>
    </lineage>
</organism>